<accession>O10620</accession>
<keyword id="KW-0325">Glycoprotein</keyword>
<keyword id="KW-0426">Late protein</keyword>
<keyword id="KW-0472">Membrane</keyword>
<keyword id="KW-0812">Transmembrane</keyword>
<keyword id="KW-1133">Transmembrane helix</keyword>
<keyword id="KW-0261">Viral envelope protein</keyword>
<keyword id="KW-0946">Virion</keyword>
<feature type="chain" id="PRO_0000132927" description="Occlusion-derived virus envelope protein E56">
    <location>
        <begin position="1" status="less than"/>
        <end position="175"/>
    </location>
</feature>
<feature type="transmembrane region" description="Helical" evidence="2">
    <location>
        <begin position="139"/>
        <end position="159"/>
    </location>
</feature>
<feature type="glycosylation site" description="N-linked (GlcNAc...) asparagine; by host" evidence="2">
    <location>
        <position position="125"/>
    </location>
</feature>
<feature type="non-terminal residue">
    <location>
        <position position="1"/>
    </location>
</feature>
<name>OE56_NPVHZ</name>
<organism>
    <name type="scientific">Heliothis zea nuclear polyhedrosis virus</name>
    <name type="common">HzSNPV</name>
    <name type="synonym">Helicoverpa zea single nucleocapsid nuclear polyhedrosis virus</name>
    <dbReference type="NCBI Taxonomy" id="28290"/>
    <lineage>
        <taxon>Viruses</taxon>
        <taxon>Viruses incertae sedis</taxon>
        <taxon>Naldaviricetes</taxon>
        <taxon>Lefavirales</taxon>
        <taxon>Baculoviridae</taxon>
        <taxon>Alphabaculovirus</taxon>
    </lineage>
</organism>
<protein>
    <recommendedName>
        <fullName>Occlusion-derived virus envelope protein E56</fullName>
        <shortName>ODV-E56</shortName>
    </recommendedName>
    <alternativeName>
        <fullName>ODVP-6E</fullName>
    </alternativeName>
</protein>
<reference key="1">
    <citation type="journal article" date="1997" name="Virus Res.">
        <title>Genetically variable triplet repeats in a RING-finger ORF of Helicoverpa species baculoviruses.</title>
        <authorList>
            <person name="Le T.H."/>
            <person name="Wu T."/>
            <person name="Robertson A.P.S."/>
            <person name="Bulach D.M."/>
            <person name="Cowan P.J."/>
            <person name="Goodge K."/>
            <person name="Tribe D.E."/>
        </authorList>
    </citation>
    <scope>NUCLEOTIDE SEQUENCE [GENOMIC DNA]</scope>
    <source>
        <strain>Elkar</strain>
    </source>
</reference>
<dbReference type="EMBL" id="U67264">
    <property type="protein sequence ID" value="AAB54101.1"/>
    <property type="molecule type" value="Genomic_DNA"/>
</dbReference>
<dbReference type="SMR" id="O10620"/>
<dbReference type="GlyCosmos" id="O10620">
    <property type="glycosylation" value="1 site, No reported glycans"/>
</dbReference>
<dbReference type="GO" id="GO:0016020">
    <property type="term" value="C:membrane"/>
    <property type="evidence" value="ECO:0007669"/>
    <property type="project" value="UniProtKB-KW"/>
</dbReference>
<dbReference type="GO" id="GO:0019031">
    <property type="term" value="C:viral envelope"/>
    <property type="evidence" value="ECO:0007669"/>
    <property type="project" value="UniProtKB-KW"/>
</dbReference>
<dbReference type="GO" id="GO:0055036">
    <property type="term" value="C:virion membrane"/>
    <property type="evidence" value="ECO:0007669"/>
    <property type="project" value="UniProtKB-SubCell"/>
</dbReference>
<dbReference type="InterPro" id="IPR006733">
    <property type="entry name" value="Baculo_ODV-E56"/>
</dbReference>
<dbReference type="Pfam" id="PF04639">
    <property type="entry name" value="Baculo_E56"/>
    <property type="match status" value="1"/>
</dbReference>
<gene>
    <name type="primary">odv-e56</name>
</gene>
<comment type="function">
    <text evidence="1">Structural protein that is specific for occlusion-derived virus (ODV) envelopes but not of budded virus (BV).</text>
</comment>
<comment type="subcellular location">
    <subcellularLocation>
        <location evidence="3">Virion membrane</location>
        <topology evidence="3">Multi-pass membrane protein</topology>
    </subcellularLocation>
    <text>Localized to the envelope region of preoccluded bundles of virions.</text>
</comment>
<comment type="miscellaneous">
    <text evidence="1">Expressed late in infection.</text>
</comment>
<comment type="similarity">
    <text evidence="3">Belongs to the baculoviridae E56 family.</text>
</comment>
<organismHost>
    <name type="scientific">Lepidoptera</name>
    <name type="common">butterflies and moths</name>
    <dbReference type="NCBI Taxonomy" id="7088"/>
</organismHost>
<evidence type="ECO:0000250" key="1"/>
<evidence type="ECO:0000255" key="2"/>
<evidence type="ECO:0000305" key="3"/>
<proteinExistence type="inferred from homology"/>
<sequence length="175" mass="19159">ALRRTGGSYYHIGLNGGEQVESCLLRYRTCVLDVNNLNDVNVCPSDPLIDNINALQSVCHGYNAEVERTVCRRSDPNADPLSLQYVDISPLATGHTISCIEPYDFGDLIGDLGLDGLLGEEGLLNKSSDKSSTSFQKLLPIIVVLGIVLLIIFIGYIVIKRMLMQPPPPPANYNR</sequence>